<dbReference type="EC" id="1.15.1.1" evidence="2"/>
<dbReference type="EMBL" id="L25672">
    <property type="status" value="NOT_ANNOTATED_CDS"/>
    <property type="molecule type" value="Unassigned_DNA"/>
</dbReference>
<dbReference type="EMBL" id="U72494">
    <property type="protein sequence ID" value="AAB17391.1"/>
    <property type="molecule type" value="Genomic_DNA"/>
</dbReference>
<dbReference type="EMBL" id="AE004091">
    <property type="protein sequence ID" value="AAG07856.1"/>
    <property type="molecule type" value="Genomic_DNA"/>
</dbReference>
<dbReference type="PIR" id="A53294">
    <property type="entry name" value="A53294"/>
</dbReference>
<dbReference type="PIR" id="D83088">
    <property type="entry name" value="D83088"/>
</dbReference>
<dbReference type="RefSeq" id="WP_003098862.1">
    <property type="nucleotide sequence ID" value="NZ_QZGE01000004.1"/>
</dbReference>
<dbReference type="SMR" id="P53652"/>
<dbReference type="FunCoup" id="P53652">
    <property type="interactions" value="550"/>
</dbReference>
<dbReference type="STRING" id="208964.PA4468"/>
<dbReference type="PaxDb" id="208964-PA4468"/>
<dbReference type="KEGG" id="pae:PA4468"/>
<dbReference type="PATRIC" id="fig|208964.12.peg.4678"/>
<dbReference type="PseudoCAP" id="PA4468"/>
<dbReference type="HOGENOM" id="CLU_031625_0_1_6"/>
<dbReference type="InParanoid" id="P53652"/>
<dbReference type="OrthoDB" id="9803125at2"/>
<dbReference type="PhylomeDB" id="P53652"/>
<dbReference type="BioCyc" id="PAER208964:G1FZ6-4557-MONOMER"/>
<dbReference type="Proteomes" id="UP000002438">
    <property type="component" value="Chromosome"/>
</dbReference>
<dbReference type="GO" id="GO:0005737">
    <property type="term" value="C:cytoplasm"/>
    <property type="evidence" value="ECO:0000318"/>
    <property type="project" value="GO_Central"/>
</dbReference>
<dbReference type="GO" id="GO:0030145">
    <property type="term" value="F:manganese ion binding"/>
    <property type="evidence" value="ECO:0000314"/>
    <property type="project" value="UniProtKB"/>
</dbReference>
<dbReference type="GO" id="GO:0004784">
    <property type="term" value="F:superoxide dismutase activity"/>
    <property type="evidence" value="ECO:0000314"/>
    <property type="project" value="UniProtKB"/>
</dbReference>
<dbReference type="GO" id="GO:0019430">
    <property type="term" value="P:removal of superoxide radicals"/>
    <property type="evidence" value="ECO:0000314"/>
    <property type="project" value="UniProtKB"/>
</dbReference>
<dbReference type="FunFam" id="1.10.287.990:FF:000001">
    <property type="entry name" value="Superoxide dismutase"/>
    <property type="match status" value="1"/>
</dbReference>
<dbReference type="FunFam" id="3.55.40.20:FF:000001">
    <property type="entry name" value="Superoxide dismutase"/>
    <property type="match status" value="1"/>
</dbReference>
<dbReference type="Gene3D" id="1.10.287.990">
    <property type="entry name" value="Fe,Mn superoxide dismutase (SOD) domain"/>
    <property type="match status" value="1"/>
</dbReference>
<dbReference type="Gene3D" id="3.55.40.20">
    <property type="entry name" value="Iron/manganese superoxide dismutase, C-terminal domain"/>
    <property type="match status" value="1"/>
</dbReference>
<dbReference type="InterPro" id="IPR001189">
    <property type="entry name" value="Mn/Fe_SOD"/>
</dbReference>
<dbReference type="InterPro" id="IPR019833">
    <property type="entry name" value="Mn/Fe_SOD_BS"/>
</dbReference>
<dbReference type="InterPro" id="IPR019832">
    <property type="entry name" value="Mn/Fe_SOD_C"/>
</dbReference>
<dbReference type="InterPro" id="IPR019831">
    <property type="entry name" value="Mn/Fe_SOD_N"/>
</dbReference>
<dbReference type="InterPro" id="IPR036324">
    <property type="entry name" value="Mn/Fe_SOD_N_sf"/>
</dbReference>
<dbReference type="InterPro" id="IPR036314">
    <property type="entry name" value="SOD_C_sf"/>
</dbReference>
<dbReference type="PANTHER" id="PTHR43595">
    <property type="entry name" value="37S RIBOSOMAL PROTEIN S26, MITOCHONDRIAL"/>
    <property type="match status" value="1"/>
</dbReference>
<dbReference type="PANTHER" id="PTHR43595:SF2">
    <property type="entry name" value="SMALL RIBOSOMAL SUBUNIT PROTEIN MS42"/>
    <property type="match status" value="1"/>
</dbReference>
<dbReference type="Pfam" id="PF02777">
    <property type="entry name" value="Sod_Fe_C"/>
    <property type="match status" value="1"/>
</dbReference>
<dbReference type="Pfam" id="PF00081">
    <property type="entry name" value="Sod_Fe_N"/>
    <property type="match status" value="1"/>
</dbReference>
<dbReference type="PIRSF" id="PIRSF000349">
    <property type="entry name" value="SODismutase"/>
    <property type="match status" value="1"/>
</dbReference>
<dbReference type="PRINTS" id="PR01703">
    <property type="entry name" value="MNSODISMTASE"/>
</dbReference>
<dbReference type="SUPFAM" id="SSF54719">
    <property type="entry name" value="Fe,Mn superoxide dismutase (SOD), C-terminal domain"/>
    <property type="match status" value="1"/>
</dbReference>
<dbReference type="SUPFAM" id="SSF46609">
    <property type="entry name" value="Fe,Mn superoxide dismutase (SOD), N-terminal domain"/>
    <property type="match status" value="1"/>
</dbReference>
<dbReference type="PROSITE" id="PS00088">
    <property type="entry name" value="SOD_MN"/>
    <property type="match status" value="1"/>
</dbReference>
<proteinExistence type="evidence at protein level"/>
<reference key="1">
    <citation type="journal article" date="1993" name="J. Bacteriol.">
        <title>Cloning and characterization of the Pseudomonas aeruginosa sodA and sodB genes encoding manganese- and iron-cofactored superoxide dismutase: demonstration of increased manganese superoxide dismutase activity in alginate-producing bacteria.</title>
        <authorList>
            <person name="Hassett D.J."/>
            <person name="Woodruff W.A."/>
            <person name="Wozniak D.J."/>
            <person name="Vasil M.L."/>
            <person name="Cohen M.S."/>
            <person name="Ohman D.E."/>
        </authorList>
    </citation>
    <scope>NUCLEOTIDE SEQUENCE [GENOMIC DNA]</scope>
    <scope>FUNCTION</scope>
    <scope>CATALYTIC ACTIVITY</scope>
    <scope>INDUCTION</scope>
    <source>
        <strain>FRD1</strain>
    </source>
</reference>
<reference key="2">
    <citation type="journal article" date="1996" name="Biochem. Biophys. Res. Commun.">
        <title>The Pseudomonas aeruginosa fumC and sodA genes belong to an iron-responsive operon.</title>
        <authorList>
            <person name="Polack B."/>
            <person name="Dacheux D."/>
            <person name="Delic-Attree I."/>
            <person name="Toussaint B."/>
            <person name="Vignais P.M."/>
        </authorList>
    </citation>
    <scope>NUCLEOTIDE SEQUENCE [GENOMIC DNA]</scope>
    <scope>CATALYTIC ACTIVITY</scope>
    <scope>INDUCTION</scope>
    <source>
        <strain>CHA</strain>
    </source>
</reference>
<reference key="3">
    <citation type="journal article" date="2000" name="Nature">
        <title>Complete genome sequence of Pseudomonas aeruginosa PAO1, an opportunistic pathogen.</title>
        <authorList>
            <person name="Stover C.K."/>
            <person name="Pham X.-Q.T."/>
            <person name="Erwin A.L."/>
            <person name="Mizoguchi S.D."/>
            <person name="Warrener P."/>
            <person name="Hickey M.J."/>
            <person name="Brinkman F.S.L."/>
            <person name="Hufnagle W.O."/>
            <person name="Kowalik D.J."/>
            <person name="Lagrou M."/>
            <person name="Garber R.L."/>
            <person name="Goltry L."/>
            <person name="Tolentino E."/>
            <person name="Westbrock-Wadman S."/>
            <person name="Yuan Y."/>
            <person name="Brody L.L."/>
            <person name="Coulter S.N."/>
            <person name="Folger K.R."/>
            <person name="Kas A."/>
            <person name="Larbig K."/>
            <person name="Lim R.M."/>
            <person name="Smith K.A."/>
            <person name="Spencer D.H."/>
            <person name="Wong G.K.-S."/>
            <person name="Wu Z."/>
            <person name="Paulsen I.T."/>
            <person name="Reizer J."/>
            <person name="Saier M.H. Jr."/>
            <person name="Hancock R.E.W."/>
            <person name="Lory S."/>
            <person name="Olson M.V."/>
        </authorList>
    </citation>
    <scope>NUCLEOTIDE SEQUENCE [LARGE SCALE GENOMIC DNA]</scope>
    <source>
        <strain>ATCC 15692 / DSM 22644 / CIP 104116 / JCM 14847 / LMG 12228 / 1C / PRS 101 / PAO1</strain>
    </source>
</reference>
<organism>
    <name type="scientific">Pseudomonas aeruginosa (strain ATCC 15692 / DSM 22644 / CIP 104116 / JCM 14847 / LMG 12228 / 1C / PRS 101 / PAO1)</name>
    <dbReference type="NCBI Taxonomy" id="208964"/>
    <lineage>
        <taxon>Bacteria</taxon>
        <taxon>Pseudomonadati</taxon>
        <taxon>Pseudomonadota</taxon>
        <taxon>Gammaproteobacteria</taxon>
        <taxon>Pseudomonadales</taxon>
        <taxon>Pseudomonadaceae</taxon>
        <taxon>Pseudomonas</taxon>
    </lineage>
</organism>
<accession>P53652</accession>
<accession>P77920</accession>
<keyword id="KW-0464">Manganese</keyword>
<keyword id="KW-0479">Metal-binding</keyword>
<keyword id="KW-0560">Oxidoreductase</keyword>
<keyword id="KW-1185">Reference proteome</keyword>
<gene>
    <name evidence="4" type="primary">sodA</name>
    <name type="ordered locus">PA4468</name>
</gene>
<evidence type="ECO:0000250" key="1"/>
<evidence type="ECO:0000269" key="2">
    <source>
    </source>
</evidence>
<evidence type="ECO:0000269" key="3">
    <source>
    </source>
</evidence>
<evidence type="ECO:0000303" key="4">
    <source>
    </source>
</evidence>
<evidence type="ECO:0000305" key="5"/>
<evidence type="ECO:0000305" key="6">
    <source>
    </source>
</evidence>
<comment type="function">
    <text evidence="2 6">Destroys superoxide anion radicals which are normally produced within the cells and which are toxic to biological systems (Probable). Partially complements double sodA-sodB deletions in E.coli (PubMed:8244935).</text>
</comment>
<comment type="catalytic activity">
    <reaction evidence="2 3">
        <text>2 superoxide + 2 H(+) = H2O2 + O2</text>
        <dbReference type="Rhea" id="RHEA:20696"/>
        <dbReference type="ChEBI" id="CHEBI:15378"/>
        <dbReference type="ChEBI" id="CHEBI:15379"/>
        <dbReference type="ChEBI" id="CHEBI:16240"/>
        <dbReference type="ChEBI" id="CHEBI:18421"/>
        <dbReference type="EC" id="1.15.1.1"/>
    </reaction>
</comment>
<comment type="cofactor">
    <cofactor evidence="1">
        <name>Mn(2+)</name>
        <dbReference type="ChEBI" id="CHEBI:29035"/>
    </cofactor>
    <text evidence="1">Binds 1 Mn(2+) ion per subunit.</text>
</comment>
<comment type="subunit">
    <text>Homodimer.</text>
</comment>
<comment type="induction">
    <text evidence="2 3">By growth in a high-phosphate succinate medium; more highly expressed in mucoid than non-mucoid cells in both Y and LTG mdia (at protein level) (PubMed:8244935). Part of the fumC-PA4469-sodA operon which is repressed by iron (PubMed:8806672).</text>
</comment>
<comment type="similarity">
    <text evidence="5">Belongs to the iron/manganese superoxide dismutase family.</text>
</comment>
<comment type="sequence caution" evidence="5">
    <conflict type="frameshift">
        <sequence resource="EMBL" id="L25672"/>
    </conflict>
</comment>
<protein>
    <recommendedName>
        <fullName>Superoxide dismutase [Mn]</fullName>
        <ecNumber evidence="2">1.15.1.1</ecNumber>
    </recommendedName>
</protein>
<name>SODM_PSEAE</name>
<feature type="chain" id="PRO_0000160067" description="Superoxide dismutase [Mn]">
    <location>
        <begin position="1"/>
        <end position="203"/>
    </location>
</feature>
<feature type="binding site" evidence="1">
    <location>
        <position position="27"/>
    </location>
    <ligand>
        <name>Mn(2+)</name>
        <dbReference type="ChEBI" id="CHEBI:29035"/>
    </ligand>
</feature>
<feature type="binding site" evidence="1">
    <location>
        <position position="81"/>
    </location>
    <ligand>
        <name>Mn(2+)</name>
        <dbReference type="ChEBI" id="CHEBI:29035"/>
    </ligand>
</feature>
<feature type="binding site" evidence="1">
    <location>
        <position position="164"/>
    </location>
    <ligand>
        <name>Mn(2+)</name>
        <dbReference type="ChEBI" id="CHEBI:29035"/>
    </ligand>
</feature>
<feature type="binding site" evidence="1">
    <location>
        <position position="168"/>
    </location>
    <ligand>
        <name>Mn(2+)</name>
        <dbReference type="ChEBI" id="CHEBI:29035"/>
    </ligand>
</feature>
<sequence length="203" mass="22506">MPHALPPLPYAYDALEPHIDALTMEIHHSKHHQTYVNNLNAALEGTPYAEQPVESLLRQLAGLPEKLRTPVVNNGGGHANHSLFWTVMSPQGGGRPDGDLGRAIDEQLGGFEAFKDAFTKAALTRFGSGWAWLSVTPQGSLLVESSGNQDSPLMNGNTPILGLDVWEHAYYLKYQNRRPEYIGAFYNVIDWREVARRYAQALA</sequence>